<protein>
    <recommendedName>
        <fullName>O-phosphoseryl-tRNA(Sec) selenium transferase</fullName>
        <ecNumber evidence="2">2.9.1.2</ecNumber>
    </recommendedName>
    <alternativeName>
        <fullName>Selenocysteine synthase</fullName>
        <shortName>Sec synthase</shortName>
    </alternativeName>
    <alternativeName>
        <fullName>Selenocysteinyl-tRNA(Sec) synthase</fullName>
    </alternativeName>
    <alternativeName>
        <fullName>Sep-tRNA:Sec-tRNA synthase</fullName>
        <shortName>SepSecS</shortName>
    </alternativeName>
    <alternativeName>
        <fullName>UGA suppressor tRNA-associated protein</fullName>
    </alternativeName>
</protein>
<gene>
    <name type="primary">SEPSECS</name>
</gene>
<feature type="chain" id="PRO_0000219877" description="O-phosphoseryl-tRNA(Sec) selenium transferase">
    <location>
        <begin position="1"/>
        <end position="501"/>
    </location>
</feature>
<feature type="region of interest" description="Tetramerization" evidence="2">
    <location>
        <begin position="1"/>
        <end position="44"/>
    </location>
</feature>
<feature type="region of interest" description="Phosphate loop (P-loop)" evidence="2">
    <location>
        <begin position="96"/>
        <end position="106"/>
    </location>
</feature>
<feature type="binding site" evidence="2">
    <location>
        <position position="75"/>
    </location>
    <ligand>
        <name>pyridoxal 5'-phosphate</name>
        <dbReference type="ChEBI" id="CHEBI:597326"/>
    </ligand>
</feature>
<feature type="binding site" evidence="2">
    <location>
        <position position="97"/>
    </location>
    <ligand>
        <name>substrate</name>
    </ligand>
</feature>
<feature type="binding site" evidence="2">
    <location>
        <position position="98"/>
    </location>
    <ligand>
        <name>substrate</name>
    </ligand>
</feature>
<feature type="binding site" evidence="2">
    <location>
        <position position="105"/>
    </location>
    <ligand>
        <name>substrate</name>
    </ligand>
</feature>
<feature type="binding site" evidence="2">
    <location>
        <position position="271"/>
    </location>
    <ligand>
        <name>tRNA</name>
        <dbReference type="ChEBI" id="CHEBI:17843"/>
    </ligand>
    <ligandPart>
        <name>tRNA variable arm</name>
    </ligandPart>
</feature>
<feature type="binding site" evidence="2">
    <location>
        <position position="313"/>
    </location>
    <ligand>
        <name>substrate</name>
    </ligand>
</feature>
<feature type="binding site" evidence="2">
    <location>
        <position position="398"/>
    </location>
    <ligand>
        <name>tRNA</name>
        <dbReference type="ChEBI" id="CHEBI:17843"/>
    </ligand>
    <ligandPart>
        <name>tRNA discriminator base</name>
    </ligandPart>
</feature>
<feature type="binding site" evidence="2">
    <location>
        <position position="463"/>
    </location>
    <ligand>
        <name>tRNA</name>
        <dbReference type="ChEBI" id="CHEBI:17843"/>
    </ligand>
    <ligandPart>
        <name>tRNA acceptor arm</name>
    </ligandPart>
</feature>
<feature type="site" description="May act as a substrate filter by repelling compounds with a negatively charged alpha-carboxylate" evidence="1">
    <location>
        <position position="74"/>
    </location>
</feature>
<feature type="modified residue" description="Phosphoserine" evidence="2">
    <location>
        <position position="14"/>
    </location>
</feature>
<feature type="modified residue" description="N6-(pyridoxal phosphate)lysine" evidence="2">
    <location>
        <position position="284"/>
    </location>
</feature>
<keyword id="KW-0963">Cytoplasm</keyword>
<keyword id="KW-0597">Phosphoprotein</keyword>
<keyword id="KW-0648">Protein biosynthesis</keyword>
<keyword id="KW-0663">Pyridoxal phosphate</keyword>
<keyword id="KW-1185">Reference proteome</keyword>
<keyword id="KW-0694">RNA-binding</keyword>
<keyword id="KW-0711">Selenium</keyword>
<keyword id="KW-0808">Transferase</keyword>
<keyword id="KW-0820">tRNA-binding</keyword>
<reference key="1">
    <citation type="submission" date="2004-11" db="EMBL/GenBank/DDBJ databases">
        <authorList>
            <consortium name="The German cDNA consortium"/>
        </authorList>
    </citation>
    <scope>NUCLEOTIDE SEQUENCE [LARGE SCALE MRNA]</scope>
    <source>
        <tissue>Kidney</tissue>
    </source>
</reference>
<name>SPCS_PONAB</name>
<organism>
    <name type="scientific">Pongo abelii</name>
    <name type="common">Sumatran orangutan</name>
    <name type="synonym">Pongo pygmaeus abelii</name>
    <dbReference type="NCBI Taxonomy" id="9601"/>
    <lineage>
        <taxon>Eukaryota</taxon>
        <taxon>Metazoa</taxon>
        <taxon>Chordata</taxon>
        <taxon>Craniata</taxon>
        <taxon>Vertebrata</taxon>
        <taxon>Euteleostomi</taxon>
        <taxon>Mammalia</taxon>
        <taxon>Eutheria</taxon>
        <taxon>Euarchontoglires</taxon>
        <taxon>Primates</taxon>
        <taxon>Haplorrhini</taxon>
        <taxon>Catarrhini</taxon>
        <taxon>Hominidae</taxon>
        <taxon>Pongo</taxon>
    </lineage>
</organism>
<sequence>MNRESFAAGERLVSPAYVRQGCEARRSHEHLIRLLLEKGKCPENGWDESTLELFLHELAIMDSNNFLGNCGVGEREGRVASALVARRHYRFIHGIGRSGDISAVQPKAAGSSLLNKIANSLVLDIIKLAGVHTVANCFVVPMATGMSLTLCFLTLRHKRPKAKYIIWPRIDQKSCFKSMITAGFEPVVIENVLEGDELRTDLKAVEAKVQELGPDYILCIHSTTSCFAPRVPDRLEELAVICANYGIPHIVNNAYGVQSSKCMHLIQQGARVGRIDAFVQSLDKNFMVPVGGAIIAGFNDSFIQEIGKMYPGRASASPSLDVLITLLSLGSNGYRKLLKERKEMFSYLSNQIKKLSEAYNERLLHTPHNPISLAMTLKTLDEHHDKAVTQLGSMLFTRQVSGARVVPLGSVQTVSGYTFRGFMSHTNNYPCAYLNAASAIGMKMQDVDLFIKRLDKCLKAVRKEQSKESDDNYDKTEDVDIEEMALKLDNVLLDTYQDASS</sequence>
<dbReference type="EC" id="2.9.1.2" evidence="2"/>
<dbReference type="EMBL" id="CR859008">
    <property type="protein sequence ID" value="CAH91203.1"/>
    <property type="molecule type" value="mRNA"/>
</dbReference>
<dbReference type="RefSeq" id="NP_001125707.1">
    <property type="nucleotide sequence ID" value="NM_001132235.1"/>
</dbReference>
<dbReference type="SMR" id="Q5RAK7"/>
<dbReference type="FunCoup" id="Q5RAK7">
    <property type="interactions" value="2762"/>
</dbReference>
<dbReference type="STRING" id="9601.ENSPPYP00000016363"/>
<dbReference type="GeneID" id="100172631"/>
<dbReference type="KEGG" id="pon:100172631"/>
<dbReference type="CTD" id="51091"/>
<dbReference type="eggNOG" id="KOG3843">
    <property type="taxonomic scope" value="Eukaryota"/>
</dbReference>
<dbReference type="InParanoid" id="Q5RAK7"/>
<dbReference type="OrthoDB" id="10263545at2759"/>
<dbReference type="UniPathway" id="UPA00906">
    <property type="reaction ID" value="UER00898"/>
</dbReference>
<dbReference type="Proteomes" id="UP000001595">
    <property type="component" value="Unplaced"/>
</dbReference>
<dbReference type="GO" id="GO:0005737">
    <property type="term" value="C:cytoplasm"/>
    <property type="evidence" value="ECO:0007669"/>
    <property type="project" value="UniProtKB-SubCell"/>
</dbReference>
<dbReference type="GO" id="GO:0098621">
    <property type="term" value="F:O-phosphoseryl-tRNA(Sec) selenium transferase activity"/>
    <property type="evidence" value="ECO:0007669"/>
    <property type="project" value="UniProtKB-EC"/>
</dbReference>
<dbReference type="GO" id="GO:0000049">
    <property type="term" value="F:tRNA binding"/>
    <property type="evidence" value="ECO:0007669"/>
    <property type="project" value="UniProtKB-KW"/>
</dbReference>
<dbReference type="GO" id="GO:0001717">
    <property type="term" value="P:conversion of seryl-tRNAsec to selenocys-tRNAsec"/>
    <property type="evidence" value="ECO:0007669"/>
    <property type="project" value="InterPro"/>
</dbReference>
<dbReference type="GO" id="GO:0001514">
    <property type="term" value="P:selenocysteine incorporation"/>
    <property type="evidence" value="ECO:0007669"/>
    <property type="project" value="TreeGrafter"/>
</dbReference>
<dbReference type="FunFam" id="3.40.640.10:FF:000070">
    <property type="entry name" value="O-phosphoseryl-tRNA(Sec) selenium transferase"/>
    <property type="match status" value="1"/>
</dbReference>
<dbReference type="Gene3D" id="3.40.640.10">
    <property type="entry name" value="Type I PLP-dependent aspartate aminotransferase-like (Major domain)"/>
    <property type="match status" value="1"/>
</dbReference>
<dbReference type="InterPro" id="IPR019793">
    <property type="entry name" value="Peroxidases_heam-ligand_BS"/>
</dbReference>
<dbReference type="InterPro" id="IPR015424">
    <property type="entry name" value="PyrdxlP-dep_Trfase"/>
</dbReference>
<dbReference type="InterPro" id="IPR015421">
    <property type="entry name" value="PyrdxlP-dep_Trfase_major"/>
</dbReference>
<dbReference type="InterPro" id="IPR019872">
    <property type="entry name" value="Sec-tRNA_Se_transferase"/>
</dbReference>
<dbReference type="InterPro" id="IPR008829">
    <property type="entry name" value="SepSecS/SepCysS"/>
</dbReference>
<dbReference type="NCBIfam" id="TIGR03531">
    <property type="entry name" value="selenium_SpcS"/>
    <property type="match status" value="1"/>
</dbReference>
<dbReference type="PANTHER" id="PTHR12944:SF2">
    <property type="entry name" value="O-PHOSPHOSERYL-TRNA(SEC) SELENIUM TRANSFERASE"/>
    <property type="match status" value="1"/>
</dbReference>
<dbReference type="PANTHER" id="PTHR12944">
    <property type="entry name" value="SOLUBLE LIVER ANTIGEN/LIVER PANCREAS ANTIGEN"/>
    <property type="match status" value="1"/>
</dbReference>
<dbReference type="Pfam" id="PF05889">
    <property type="entry name" value="SepSecS"/>
    <property type="match status" value="1"/>
</dbReference>
<dbReference type="PIRSF" id="PIRSF017689">
    <property type="entry name" value="SepSecS"/>
    <property type="match status" value="1"/>
</dbReference>
<dbReference type="SUPFAM" id="SSF53383">
    <property type="entry name" value="PLP-dependent transferases"/>
    <property type="match status" value="1"/>
</dbReference>
<comment type="function">
    <text evidence="2">Converts O-phosphoseryl-tRNA(Sec) to selenocysteinyl-tRNA(Sec) required for selenoprotein biosynthesis.</text>
</comment>
<comment type="catalytic activity">
    <reaction evidence="2">
        <text>O-phospho-L-seryl-tRNA(Sec) + selenophosphate + H2O = L-selenocysteinyl-tRNA(Sec) + 2 phosphate</text>
        <dbReference type="Rhea" id="RHEA:25041"/>
        <dbReference type="Rhea" id="RHEA-COMP:9743"/>
        <dbReference type="Rhea" id="RHEA-COMP:9947"/>
        <dbReference type="ChEBI" id="CHEBI:15377"/>
        <dbReference type="ChEBI" id="CHEBI:16144"/>
        <dbReference type="ChEBI" id="CHEBI:43474"/>
        <dbReference type="ChEBI" id="CHEBI:78551"/>
        <dbReference type="ChEBI" id="CHEBI:78573"/>
        <dbReference type="EC" id="2.9.1.2"/>
    </reaction>
</comment>
<comment type="cofactor">
    <cofactor evidence="2">
        <name>pyridoxal 5'-phosphate</name>
        <dbReference type="ChEBI" id="CHEBI:597326"/>
    </cofactor>
</comment>
<comment type="pathway">
    <text evidence="2">Aminoacyl-tRNA biosynthesis; selenocysteinyl-tRNA(Sec) biosynthesis; selenocysteinyl-tRNA(Sec) from L-seryl-tRNA(Sec) (archaeal/eukaryal route): step 2/2.</text>
</comment>
<comment type="subunit">
    <text evidence="2">Homotetramer formed by a catalytic dimer and a non-catalytic dimer serving as a binding platform that orients tRNASec for catalysis. Each tetramer binds the CCA ends of two tRNAs which point to the active sites of the catalytic dimer.</text>
</comment>
<comment type="subcellular location">
    <subcellularLocation>
        <location evidence="2">Cytoplasm</location>
    </subcellularLocation>
</comment>
<comment type="similarity">
    <text evidence="3">Belongs to the SepSecS family.</text>
</comment>
<accession>Q5RAK7</accession>
<evidence type="ECO:0000250" key="1">
    <source>
        <dbReference type="UniProtKB" id="Q6P6M7"/>
    </source>
</evidence>
<evidence type="ECO:0000250" key="2">
    <source>
        <dbReference type="UniProtKB" id="Q9HD40"/>
    </source>
</evidence>
<evidence type="ECO:0000305" key="3"/>
<proteinExistence type="evidence at transcript level"/>